<organism>
    <name type="scientific">Burkholderia cenocepacia (strain ATCC BAA-245 / DSM 16553 / LMG 16656 / NCTC 13227 / J2315 / CF5610)</name>
    <name type="common">Burkholderia cepacia (strain J2315)</name>
    <dbReference type="NCBI Taxonomy" id="216591"/>
    <lineage>
        <taxon>Bacteria</taxon>
        <taxon>Pseudomonadati</taxon>
        <taxon>Pseudomonadota</taxon>
        <taxon>Betaproteobacteria</taxon>
        <taxon>Burkholderiales</taxon>
        <taxon>Burkholderiaceae</taxon>
        <taxon>Burkholderia</taxon>
        <taxon>Burkholderia cepacia complex</taxon>
    </lineage>
</organism>
<evidence type="ECO:0000255" key="1">
    <source>
        <dbReference type="HAMAP-Rule" id="MF_00073"/>
    </source>
</evidence>
<gene>
    <name evidence="1" type="primary">nusB</name>
    <name type="ordered locus">BceJ2315_30010</name>
    <name type="ORF">BCAL3055</name>
</gene>
<dbReference type="EMBL" id="AM747720">
    <property type="protein sequence ID" value="CAR53377.1"/>
    <property type="molecule type" value="Genomic_DNA"/>
</dbReference>
<dbReference type="RefSeq" id="WP_006476662.1">
    <property type="nucleotide sequence ID" value="NC_011000.1"/>
</dbReference>
<dbReference type="SMR" id="B4EBT9"/>
<dbReference type="GeneID" id="83047707"/>
<dbReference type="KEGG" id="bcj:BCAL3055"/>
<dbReference type="eggNOG" id="COG0781">
    <property type="taxonomic scope" value="Bacteria"/>
</dbReference>
<dbReference type="HOGENOM" id="CLU_087843_4_1_4"/>
<dbReference type="BioCyc" id="BCEN216591:G1G1V-3387-MONOMER"/>
<dbReference type="Proteomes" id="UP000001035">
    <property type="component" value="Chromosome 1"/>
</dbReference>
<dbReference type="GO" id="GO:0005829">
    <property type="term" value="C:cytosol"/>
    <property type="evidence" value="ECO:0007669"/>
    <property type="project" value="TreeGrafter"/>
</dbReference>
<dbReference type="GO" id="GO:0003723">
    <property type="term" value="F:RNA binding"/>
    <property type="evidence" value="ECO:0007669"/>
    <property type="project" value="UniProtKB-UniRule"/>
</dbReference>
<dbReference type="GO" id="GO:0006353">
    <property type="term" value="P:DNA-templated transcription termination"/>
    <property type="evidence" value="ECO:0007669"/>
    <property type="project" value="UniProtKB-UniRule"/>
</dbReference>
<dbReference type="GO" id="GO:0031564">
    <property type="term" value="P:transcription antitermination"/>
    <property type="evidence" value="ECO:0007669"/>
    <property type="project" value="UniProtKB-KW"/>
</dbReference>
<dbReference type="Gene3D" id="1.10.940.10">
    <property type="entry name" value="NusB-like"/>
    <property type="match status" value="1"/>
</dbReference>
<dbReference type="HAMAP" id="MF_00073">
    <property type="entry name" value="NusB"/>
    <property type="match status" value="1"/>
</dbReference>
<dbReference type="InterPro" id="IPR035926">
    <property type="entry name" value="NusB-like_sf"/>
</dbReference>
<dbReference type="InterPro" id="IPR011605">
    <property type="entry name" value="NusB_fam"/>
</dbReference>
<dbReference type="InterPro" id="IPR006027">
    <property type="entry name" value="NusB_RsmB_TIM44"/>
</dbReference>
<dbReference type="NCBIfam" id="TIGR01951">
    <property type="entry name" value="nusB"/>
    <property type="match status" value="1"/>
</dbReference>
<dbReference type="PANTHER" id="PTHR11078:SF3">
    <property type="entry name" value="ANTITERMINATION NUSB DOMAIN-CONTAINING PROTEIN"/>
    <property type="match status" value="1"/>
</dbReference>
<dbReference type="PANTHER" id="PTHR11078">
    <property type="entry name" value="N UTILIZATION SUBSTANCE PROTEIN B-RELATED"/>
    <property type="match status" value="1"/>
</dbReference>
<dbReference type="Pfam" id="PF01029">
    <property type="entry name" value="NusB"/>
    <property type="match status" value="1"/>
</dbReference>
<dbReference type="SUPFAM" id="SSF48013">
    <property type="entry name" value="NusB-like"/>
    <property type="match status" value="1"/>
</dbReference>
<reference key="1">
    <citation type="journal article" date="2009" name="J. Bacteriol.">
        <title>The genome of Burkholderia cenocepacia J2315, an epidemic pathogen of cystic fibrosis patients.</title>
        <authorList>
            <person name="Holden M.T."/>
            <person name="Seth-Smith H.M."/>
            <person name="Crossman L.C."/>
            <person name="Sebaihia M."/>
            <person name="Bentley S.D."/>
            <person name="Cerdeno-Tarraga A.M."/>
            <person name="Thomson N.R."/>
            <person name="Bason N."/>
            <person name="Quail M.A."/>
            <person name="Sharp S."/>
            <person name="Cherevach I."/>
            <person name="Churcher C."/>
            <person name="Goodhead I."/>
            <person name="Hauser H."/>
            <person name="Holroyd N."/>
            <person name="Mungall K."/>
            <person name="Scott P."/>
            <person name="Walker D."/>
            <person name="White B."/>
            <person name="Rose H."/>
            <person name="Iversen P."/>
            <person name="Mil-Homens D."/>
            <person name="Rocha E.P."/>
            <person name="Fialho A.M."/>
            <person name="Baldwin A."/>
            <person name="Dowson C."/>
            <person name="Barrell B.G."/>
            <person name="Govan J.R."/>
            <person name="Vandamme P."/>
            <person name="Hart C.A."/>
            <person name="Mahenthiralingam E."/>
            <person name="Parkhill J."/>
        </authorList>
    </citation>
    <scope>NUCLEOTIDE SEQUENCE [LARGE SCALE GENOMIC DNA]</scope>
    <source>
        <strain>ATCC BAA-245 / DSM 16553 / LMG 16656 / NCTC 13227 / J2315 / CF5610</strain>
    </source>
</reference>
<proteinExistence type="inferred from homology"/>
<accession>B4EBT9</accession>
<name>NUSB_BURCJ</name>
<sequence>MKKSARRQSRELATQGLYQWLLSNAPSGEIDAQLRGALGYDKADKELLEAILHGVIREHATLVEALAPSLDRPIDQLSPVERAVLLIATFELTHHVETPYRVIINEAVELAKTFGGSDGYKYVNGVLDKLAAKLRPAETQARRNG</sequence>
<feature type="chain" id="PRO_1000092531" description="Transcription antitermination protein NusB">
    <location>
        <begin position="1"/>
        <end position="145"/>
    </location>
</feature>
<protein>
    <recommendedName>
        <fullName evidence="1">Transcription antitermination protein NusB</fullName>
    </recommendedName>
    <alternativeName>
        <fullName evidence="1">Antitermination factor NusB</fullName>
    </alternativeName>
</protein>
<comment type="function">
    <text evidence="1">Involved in transcription antitermination. Required for transcription of ribosomal RNA (rRNA) genes. Binds specifically to the boxA antiterminator sequence of the ribosomal RNA (rrn) operons.</text>
</comment>
<comment type="similarity">
    <text evidence="1">Belongs to the NusB family.</text>
</comment>
<keyword id="KW-0694">RNA-binding</keyword>
<keyword id="KW-0804">Transcription</keyword>
<keyword id="KW-0889">Transcription antitermination</keyword>
<keyword id="KW-0805">Transcription regulation</keyword>